<comment type="function">
    <text evidence="2 4 5 6 7">Lipid transport protein (LTP) involved in non-vesicular transfer of lipids between membranes. Functions in phosphoinositide-coupled directional transport of various lipids by carrying the lipid molecule in a hydrophobic pocket and transferring it between membranes through the cytosol. Involved in maintenance of intracellular sterol distribution and homeostasis. Plays a role in ergosterol synthesis (PubMed:11238399, PubMed:15173322, PubMed:16408938, PubMed:20008566). Binds and transports sterol (PubMed:20008566). May be involved in ergosterol transport from the plasma membrane (PM) to the ER (PubMed:16585271).</text>
</comment>
<comment type="subcellular location">
    <subcellularLocation>
        <location evidence="8">Vacuole membrane</location>
    </subcellularLocation>
    <subcellularLocation>
        <location evidence="8">Bud neck</location>
    </subcellularLocation>
</comment>
<comment type="domain">
    <text evidence="12">The OSBP-related domain (ORD) mediates binding of sterols and phospholipids. It displays an incomplete beta-barrel containing a central hydrophobic tunnel that can accommodate a single lipid molecule with a flexible lid covering the tunnel entrance. The ORD can bind two membranes simultaneously. It has at least two membrane-binding surfaces; one near the mouth of the lipid-binding pocket and a distal site that can bind a second membrane. These structural features correlate with the phosphatidylinositol 4-phosphate (PI(4)P)-coupled lipid transport optimized in closely apposed membranes, such as organelle contact sites. The lipid transfer cycle starts from the association of the LTP with a donor membrane, which accompanies conformational changes that uncover the ligand-binding pocket. The tunnel opening is generally mediated by displacement of the lid covering the binding pocket allowing uptake or release of a lipid molecule. The LTPs extract the lipid from the membrane by providing a hydrophobic environment as well as specific interaction. Dissociation from the donor membrane shifts the conformation to a closed form. Then, the LTPs loaded with a cargo lipid diffuse through the aqueous phase. Lid opening may be induced by the interaction of a hydrophobic side of the lid with the target membranes.</text>
</comment>
<comment type="miscellaneous">
    <text evidence="3">Present with 1690 molecules/cell in log phase SD medium.</text>
</comment>
<comment type="similarity">
    <text evidence="11">Belongs to the OSBP family.</text>
</comment>
<reference key="1">
    <citation type="journal article" date="1994" name="Yeast">
        <title>A new family of yeast genes implicated in ergosterol synthesis is related to the human oxysterol binding protein.</title>
        <authorList>
            <person name="Jiang B."/>
            <person name="Brown J.L."/>
            <person name="Sheraton J."/>
            <person name="Fortin N."/>
            <person name="Bussey H."/>
        </authorList>
    </citation>
    <scope>NUCLEOTIDE SEQUENCE [GENOMIC DNA]</scope>
</reference>
<reference key="2">
    <citation type="journal article" date="1996" name="Yeast">
        <title>Sequence and analysis of a 26.9 kb fragment from chromosome XV of the yeast Saccharomyces cerevisiae.</title>
        <authorList>
            <person name="Boyer J."/>
            <person name="Michaux G."/>
            <person name="Fairhead C."/>
            <person name="Gaillon L."/>
            <person name="Dujon B."/>
        </authorList>
    </citation>
    <scope>NUCLEOTIDE SEQUENCE [GENOMIC DNA]</scope>
    <source>
        <strain>ATCC 96604 / S288c / FY1679</strain>
    </source>
</reference>
<reference key="3">
    <citation type="journal article" date="1997" name="Nature">
        <title>The nucleotide sequence of Saccharomyces cerevisiae chromosome XV.</title>
        <authorList>
            <person name="Dujon B."/>
            <person name="Albermann K."/>
            <person name="Aldea M."/>
            <person name="Alexandraki D."/>
            <person name="Ansorge W."/>
            <person name="Arino J."/>
            <person name="Benes V."/>
            <person name="Bohn C."/>
            <person name="Bolotin-Fukuhara M."/>
            <person name="Bordonne R."/>
            <person name="Boyer J."/>
            <person name="Camasses A."/>
            <person name="Casamayor A."/>
            <person name="Casas C."/>
            <person name="Cheret G."/>
            <person name="Cziepluch C."/>
            <person name="Daignan-Fornier B."/>
            <person name="Dang V.-D."/>
            <person name="de Haan M."/>
            <person name="Delius H."/>
            <person name="Durand P."/>
            <person name="Fairhead C."/>
            <person name="Feldmann H."/>
            <person name="Gaillon L."/>
            <person name="Galisson F."/>
            <person name="Gamo F.-J."/>
            <person name="Gancedo C."/>
            <person name="Goffeau A."/>
            <person name="Goulding S.E."/>
            <person name="Grivell L.A."/>
            <person name="Habbig B."/>
            <person name="Hand N.J."/>
            <person name="Hani J."/>
            <person name="Hattenhorst U."/>
            <person name="Hebling U."/>
            <person name="Hernando Y."/>
            <person name="Herrero E."/>
            <person name="Heumann K."/>
            <person name="Hiesel R."/>
            <person name="Hilger F."/>
            <person name="Hofmann B."/>
            <person name="Hollenberg C.P."/>
            <person name="Hughes B."/>
            <person name="Jauniaux J.-C."/>
            <person name="Kalogeropoulos A."/>
            <person name="Katsoulou C."/>
            <person name="Kordes E."/>
            <person name="Lafuente M.J."/>
            <person name="Landt O."/>
            <person name="Louis E.J."/>
            <person name="Maarse A.C."/>
            <person name="Madania A."/>
            <person name="Mannhaupt G."/>
            <person name="Marck C."/>
            <person name="Martin R.P."/>
            <person name="Mewes H.-W."/>
            <person name="Michaux G."/>
            <person name="Paces V."/>
            <person name="Parle-McDermott A.G."/>
            <person name="Pearson B.M."/>
            <person name="Perrin A."/>
            <person name="Pettersson B."/>
            <person name="Poch O."/>
            <person name="Pohl T.M."/>
            <person name="Poirey R."/>
            <person name="Portetelle D."/>
            <person name="Pujol A."/>
            <person name="Purnelle B."/>
            <person name="Ramezani Rad M."/>
            <person name="Rechmann S."/>
            <person name="Schwager C."/>
            <person name="Schweizer M."/>
            <person name="Sor F."/>
            <person name="Sterky F."/>
            <person name="Tarassov I.A."/>
            <person name="Teodoru C."/>
            <person name="Tettelin H."/>
            <person name="Thierry A."/>
            <person name="Tobiasch E."/>
            <person name="Tzermia M."/>
            <person name="Uhlen M."/>
            <person name="Unseld M."/>
            <person name="Valens M."/>
            <person name="Vandenbol M."/>
            <person name="Vetter I."/>
            <person name="Vlcek C."/>
            <person name="Voet M."/>
            <person name="Volckaert G."/>
            <person name="Voss H."/>
            <person name="Wambutt R."/>
            <person name="Wedler H."/>
            <person name="Wiemann S."/>
            <person name="Winsor B."/>
            <person name="Wolfe K.H."/>
            <person name="Zollner A."/>
            <person name="Zumstein E."/>
            <person name="Kleine K."/>
        </authorList>
    </citation>
    <scope>NUCLEOTIDE SEQUENCE [LARGE SCALE GENOMIC DNA]</scope>
    <source>
        <strain>ATCC 204508 / S288c</strain>
    </source>
</reference>
<reference key="4">
    <citation type="journal article" date="2014" name="G3 (Bethesda)">
        <title>The reference genome sequence of Saccharomyces cerevisiae: Then and now.</title>
        <authorList>
            <person name="Engel S.R."/>
            <person name="Dietrich F.S."/>
            <person name="Fisk D.G."/>
            <person name="Binkley G."/>
            <person name="Balakrishnan R."/>
            <person name="Costanzo M.C."/>
            <person name="Dwight S.S."/>
            <person name="Hitz B.C."/>
            <person name="Karra K."/>
            <person name="Nash R.S."/>
            <person name="Weng S."/>
            <person name="Wong E.D."/>
            <person name="Lloyd P."/>
            <person name="Skrzypek M.S."/>
            <person name="Miyasato S.R."/>
            <person name="Simison M."/>
            <person name="Cherry J.M."/>
        </authorList>
    </citation>
    <scope>GENOME REANNOTATION</scope>
    <source>
        <strain>ATCC 204508 / S288c</strain>
    </source>
</reference>
<reference key="5">
    <citation type="journal article" date="2001" name="Genetics">
        <title>Overlapping functions of the yeast oxysterol-binding protein homologues.</title>
        <authorList>
            <person name="Beh C.T."/>
            <person name="Cool L."/>
            <person name="Phillips J."/>
            <person name="Rine J."/>
        </authorList>
    </citation>
    <scope>GENETIC ANALYSIS</scope>
</reference>
<reference key="6">
    <citation type="journal article" date="2003" name="Nature">
        <title>Global analysis of protein expression in yeast.</title>
        <authorList>
            <person name="Ghaemmaghami S."/>
            <person name="Huh W.-K."/>
            <person name="Bower K."/>
            <person name="Howson R.W."/>
            <person name="Belle A."/>
            <person name="Dephoure N."/>
            <person name="O'Shea E.K."/>
            <person name="Weissman J.S."/>
        </authorList>
    </citation>
    <scope>LEVEL OF PROTEIN EXPRESSION [LARGE SCALE ANALYSIS]</scope>
</reference>
<reference key="7">
    <citation type="journal article" date="2004" name="J. Cell Sci.">
        <title>A role for yeast oxysterol-binding protein homologs in endocytosis and in the maintenance of intracellular sterol-lipid distribution.</title>
        <authorList>
            <person name="Beh C.T."/>
            <person name="Rine J."/>
        </authorList>
    </citation>
    <scope>FUNCTION</scope>
</reference>
<reference key="8">
    <citation type="journal article" date="2006" name="Anal. Chem.">
        <title>Sterol binding assay using surface plasmon fluorescence spectroscopy.</title>
        <authorList>
            <person name="Wiltschi B."/>
            <person name="Schober M."/>
            <person name="Kohlwein S.D."/>
            <person name="Oesterhelt D."/>
            <person name="Sinner E.K."/>
        </authorList>
    </citation>
    <scope>FUNCTION</scope>
</reference>
<reference key="9">
    <citation type="journal article" date="2006" name="J. Cell Biol.">
        <title>Nonvesicular sterol movement from plasma membrane to ER requires oxysterol-binding protein-related proteins and phosphoinositides.</title>
        <authorList>
            <person name="Raychaudhuri S."/>
            <person name="Im Y.J."/>
            <person name="Hurley J.H."/>
            <person name="Prinz W.A."/>
        </authorList>
    </citation>
    <scope>FUNCTION</scope>
</reference>
<reference key="10">
    <citation type="journal article" date="2009" name="J. Cell Biol.">
        <title>Lipid-regulated sterol transfer between closely apposed membranes by oxysterol-binding protein homologues.</title>
        <authorList>
            <person name="Schulz T.A."/>
            <person name="Choi M.G."/>
            <person name="Raychaudhuri S."/>
            <person name="Mears J.A."/>
            <person name="Ghirlando R."/>
            <person name="Hinshaw J.E."/>
            <person name="Prinz W.A."/>
        </authorList>
    </citation>
    <scope>FUNCTION</scope>
    <scope>DOMAIN</scope>
</reference>
<reference key="11">
    <citation type="journal article" date="2016" name="Nat. Methods">
        <title>One library to make them all: streamlining the creation of yeast libraries via a SWAp-Tag strategy.</title>
        <authorList>
            <person name="Yofe I."/>
            <person name="Weill U."/>
            <person name="Meurer M."/>
            <person name="Chuartzman S."/>
            <person name="Zalckvar E."/>
            <person name="Goldman O."/>
            <person name="Ben-Dor S."/>
            <person name="Schuetze C."/>
            <person name="Wiedemann N."/>
            <person name="Knop M."/>
            <person name="Khmelinskii A."/>
            <person name="Schuldiner M."/>
        </authorList>
    </citation>
    <scope>SUBCELLULAR LOCATION [LARGE SCALE ANALYSIS]</scope>
</reference>
<feature type="chain" id="PRO_0000100385" description="Oxysterol-binding protein homolog 5">
    <location>
        <begin position="1"/>
        <end position="434"/>
    </location>
</feature>
<feature type="region of interest" description="OSBP-related domain (ORD)" evidence="11">
    <location>
        <begin position="18"/>
        <end position="371"/>
    </location>
</feature>
<feature type="binding site" evidence="1">
    <location>
        <begin position="24"/>
        <end position="29"/>
    </location>
    <ligand>
        <name>a 1,2-diacyl-sn-glycero-3-phospho-(1D-myo-inositol 4-phosphate)</name>
        <dbReference type="ChEBI" id="CHEBI:58178"/>
    </ligand>
</feature>
<feature type="binding site" evidence="1">
    <location>
        <position position="96"/>
    </location>
    <ligand>
        <name>20-hydroxycholesterol</name>
        <dbReference type="ChEBI" id="CHEBI:1296"/>
    </ligand>
</feature>
<feature type="binding site" evidence="1">
    <location>
        <position position="96"/>
    </location>
    <ligand>
        <name>25-hydroxycholesterol</name>
        <dbReference type="ChEBI" id="CHEBI:42977"/>
    </ligand>
</feature>
<feature type="binding site" evidence="1">
    <location>
        <position position="96"/>
    </location>
    <ligand>
        <name>7beta-hydroxycholesterol</name>
        <dbReference type="ChEBI" id="CHEBI:42989"/>
    </ligand>
</feature>
<feature type="binding site" evidence="1">
    <location>
        <position position="96"/>
    </location>
    <ligand>
        <name>cholesterol</name>
        <dbReference type="ChEBI" id="CHEBI:16113"/>
    </ligand>
</feature>
<feature type="binding site" evidence="1">
    <location>
        <position position="96"/>
    </location>
    <ligand>
        <name>ergosterol</name>
        <dbReference type="ChEBI" id="CHEBI:16933"/>
    </ligand>
</feature>
<feature type="binding site" evidence="1">
    <location>
        <position position="100"/>
    </location>
    <ligand>
        <name>7beta-hydroxycholesterol</name>
        <dbReference type="ChEBI" id="CHEBI:42989"/>
    </ligand>
</feature>
<feature type="binding site" evidence="1">
    <location>
        <begin position="109"/>
        <end position="112"/>
    </location>
    <ligand>
        <name>a 1,2-diacyl-sn-glycero-3-phospho-(1D-myo-inositol 4-phosphate)</name>
        <dbReference type="ChEBI" id="CHEBI:58178"/>
    </ligand>
</feature>
<feature type="binding site" evidence="1">
    <location>
        <begin position="143"/>
        <end position="144"/>
    </location>
    <ligand>
        <name>a 1,2-diacyl-sn-glycero-3-phospho-(1D-myo-inositol 4-phosphate)</name>
        <dbReference type="ChEBI" id="CHEBI:58178"/>
    </ligand>
</feature>
<feature type="binding site" evidence="1">
    <location>
        <position position="335"/>
    </location>
    <ligand>
        <name>a 1,2-diacyl-sn-glycero-3-phospho-(1D-myo-inositol 4-phosphate)</name>
        <dbReference type="ChEBI" id="CHEBI:58178"/>
    </ligand>
</feature>
<feature type="binding site" evidence="1">
    <location>
        <position position="339"/>
    </location>
    <ligand>
        <name>a 1,2-diacyl-sn-glycero-3-phospho-(1D-myo-inositol 4-phosphate)</name>
        <dbReference type="ChEBI" id="CHEBI:58178"/>
    </ligand>
</feature>
<feature type="binding site" evidence="1">
    <location>
        <position position="343"/>
    </location>
    <ligand>
        <name>a 1,2-diacyl-sn-glycero-3-phospho-(1D-myo-inositol 4-phosphate)</name>
        <dbReference type="ChEBI" id="CHEBI:58178"/>
    </ligand>
</feature>
<feature type="modified residue" description="Phosphoserine" evidence="1">
    <location>
        <position position="389"/>
    </location>
</feature>
<proteinExistence type="evidence at protein level"/>
<name>HES1_YEAST</name>
<organism>
    <name type="scientific">Saccharomyces cerevisiae (strain ATCC 204508 / S288c)</name>
    <name type="common">Baker's yeast</name>
    <dbReference type="NCBI Taxonomy" id="559292"/>
    <lineage>
        <taxon>Eukaryota</taxon>
        <taxon>Fungi</taxon>
        <taxon>Dikarya</taxon>
        <taxon>Ascomycota</taxon>
        <taxon>Saccharomycotina</taxon>
        <taxon>Saccharomycetes</taxon>
        <taxon>Saccharomycetales</taxon>
        <taxon>Saccharomycetaceae</taxon>
        <taxon>Saccharomyces</taxon>
    </lineage>
</organism>
<gene>
    <name evidence="10" type="primary">HES1</name>
    <name evidence="9" type="synonym">OSH5</name>
    <name type="ordered locus">YOR237W</name>
    <name type="ORF">O5234</name>
</gene>
<accession>P35843</accession>
<accession>D6W2U0</accession>
<dbReference type="EMBL" id="U03914">
    <property type="protein sequence ID" value="AAA17737.1"/>
    <property type="molecule type" value="Unassigned_DNA"/>
</dbReference>
<dbReference type="EMBL" id="Z75145">
    <property type="protein sequence ID" value="CAA99458.1"/>
    <property type="molecule type" value="Genomic_DNA"/>
</dbReference>
<dbReference type="EMBL" id="BK006948">
    <property type="protein sequence ID" value="DAA11006.1"/>
    <property type="molecule type" value="Genomic_DNA"/>
</dbReference>
<dbReference type="PIR" id="S42677">
    <property type="entry name" value="S42677"/>
</dbReference>
<dbReference type="RefSeq" id="NP_014880.3">
    <property type="nucleotide sequence ID" value="NM_001183656.3"/>
</dbReference>
<dbReference type="SMR" id="P35843"/>
<dbReference type="BioGRID" id="34629">
    <property type="interactions" value="49"/>
</dbReference>
<dbReference type="FunCoup" id="P35843">
    <property type="interactions" value="84"/>
</dbReference>
<dbReference type="STRING" id="4932.YOR237W"/>
<dbReference type="PaxDb" id="4932-YOR237W"/>
<dbReference type="PeptideAtlas" id="P35843"/>
<dbReference type="EnsemblFungi" id="YOR237W_mRNA">
    <property type="protein sequence ID" value="YOR237W"/>
    <property type="gene ID" value="YOR237W"/>
</dbReference>
<dbReference type="GeneID" id="854412"/>
<dbReference type="KEGG" id="sce:YOR237W"/>
<dbReference type="AGR" id="SGD:S000005763"/>
<dbReference type="SGD" id="S000005763">
    <property type="gene designation" value="HES1"/>
</dbReference>
<dbReference type="VEuPathDB" id="FungiDB:YOR237W"/>
<dbReference type="eggNOG" id="KOG2210">
    <property type="taxonomic scope" value="Eukaryota"/>
</dbReference>
<dbReference type="GeneTree" id="ENSGT00940000176691"/>
<dbReference type="HOGENOM" id="CLU_012334_0_0_1"/>
<dbReference type="InParanoid" id="P35843"/>
<dbReference type="OMA" id="WHTRPKG"/>
<dbReference type="OrthoDB" id="14833at2759"/>
<dbReference type="BioCyc" id="YEAST:G3O-33733-MONOMER"/>
<dbReference type="Reactome" id="R-SCE-1482801">
    <property type="pathway name" value="Acyl chain remodelling of PS"/>
</dbReference>
<dbReference type="Reactome" id="R-SCE-192105">
    <property type="pathway name" value="Synthesis of bile acids and bile salts"/>
</dbReference>
<dbReference type="BioGRID-ORCS" id="854412">
    <property type="hits" value="6 hits in 10 CRISPR screens"/>
</dbReference>
<dbReference type="PRO" id="PR:P35843"/>
<dbReference type="Proteomes" id="UP000002311">
    <property type="component" value="Chromosome XV"/>
</dbReference>
<dbReference type="RNAct" id="P35843">
    <property type="molecule type" value="protein"/>
</dbReference>
<dbReference type="GO" id="GO:0005935">
    <property type="term" value="C:cellular bud neck"/>
    <property type="evidence" value="ECO:0007005"/>
    <property type="project" value="SGD"/>
</dbReference>
<dbReference type="GO" id="GO:0005829">
    <property type="term" value="C:cytosol"/>
    <property type="evidence" value="ECO:0000318"/>
    <property type="project" value="GO_Central"/>
</dbReference>
<dbReference type="GO" id="GO:0000329">
    <property type="term" value="C:fungal-type vacuole membrane"/>
    <property type="evidence" value="ECO:0007005"/>
    <property type="project" value="SGD"/>
</dbReference>
<dbReference type="GO" id="GO:0016020">
    <property type="term" value="C:membrane"/>
    <property type="evidence" value="ECO:0000318"/>
    <property type="project" value="GO_Central"/>
</dbReference>
<dbReference type="GO" id="GO:0008289">
    <property type="term" value="F:lipid binding"/>
    <property type="evidence" value="ECO:0000314"/>
    <property type="project" value="SGD"/>
</dbReference>
<dbReference type="GO" id="GO:0008142">
    <property type="term" value="F:oxysterol binding"/>
    <property type="evidence" value="ECO:0000314"/>
    <property type="project" value="SGD"/>
</dbReference>
<dbReference type="GO" id="GO:0120015">
    <property type="term" value="F:sterol transfer activity"/>
    <property type="evidence" value="ECO:0000314"/>
    <property type="project" value="SGD"/>
</dbReference>
<dbReference type="GO" id="GO:0006897">
    <property type="term" value="P:endocytosis"/>
    <property type="evidence" value="ECO:0000316"/>
    <property type="project" value="SGD"/>
</dbReference>
<dbReference type="GO" id="GO:0006887">
    <property type="term" value="P:exocytosis"/>
    <property type="evidence" value="ECO:0000316"/>
    <property type="project" value="SGD"/>
</dbReference>
<dbReference type="GO" id="GO:0030011">
    <property type="term" value="P:maintenance of cell polarity"/>
    <property type="evidence" value="ECO:0000316"/>
    <property type="project" value="SGD"/>
</dbReference>
<dbReference type="GO" id="GO:0034727">
    <property type="term" value="P:piecemeal microautophagy of the nucleus"/>
    <property type="evidence" value="ECO:0000316"/>
    <property type="project" value="SGD"/>
</dbReference>
<dbReference type="GO" id="GO:0016126">
    <property type="term" value="P:sterol biosynthetic process"/>
    <property type="evidence" value="ECO:0007669"/>
    <property type="project" value="UniProtKB-KW"/>
</dbReference>
<dbReference type="GO" id="GO:0015918">
    <property type="term" value="P:sterol transport"/>
    <property type="evidence" value="ECO:0000314"/>
    <property type="project" value="SGD"/>
</dbReference>
<dbReference type="FunFam" id="2.40.160.120:FF:000010">
    <property type="entry name" value="Oxysterol-binding protein homolog 4"/>
    <property type="match status" value="1"/>
</dbReference>
<dbReference type="FunFam" id="3.30.70.3490:FF:000012">
    <property type="entry name" value="Oxysterol-binding protein homolog 4"/>
    <property type="match status" value="1"/>
</dbReference>
<dbReference type="Gene3D" id="1.10.287.2720">
    <property type="match status" value="1"/>
</dbReference>
<dbReference type="Gene3D" id="2.40.160.120">
    <property type="match status" value="1"/>
</dbReference>
<dbReference type="Gene3D" id="3.30.70.3490">
    <property type="match status" value="1"/>
</dbReference>
<dbReference type="Gene3D" id="6.10.250.1430">
    <property type="match status" value="1"/>
</dbReference>
<dbReference type="InterPro" id="IPR037239">
    <property type="entry name" value="OSBP_sf"/>
</dbReference>
<dbReference type="InterPro" id="IPR000648">
    <property type="entry name" value="Oxysterol-bd"/>
</dbReference>
<dbReference type="InterPro" id="IPR018494">
    <property type="entry name" value="Oxysterol-bd_CS"/>
</dbReference>
<dbReference type="PANTHER" id="PTHR10972:SF184">
    <property type="entry name" value="OXYSTEROL-BINDING PROTEIN HOMOLOG 4-RELATED"/>
    <property type="match status" value="1"/>
</dbReference>
<dbReference type="PANTHER" id="PTHR10972">
    <property type="entry name" value="OXYSTEROL-BINDING PROTEIN-RELATED"/>
    <property type="match status" value="1"/>
</dbReference>
<dbReference type="Pfam" id="PF01237">
    <property type="entry name" value="Oxysterol_BP"/>
    <property type="match status" value="1"/>
</dbReference>
<dbReference type="SUPFAM" id="SSF144000">
    <property type="entry name" value="Oxysterol-binding protein-like"/>
    <property type="match status" value="1"/>
</dbReference>
<dbReference type="PROSITE" id="PS01013">
    <property type="entry name" value="OSBP"/>
    <property type="match status" value="1"/>
</dbReference>
<protein>
    <recommendedName>
        <fullName evidence="9">Oxysterol-binding protein homolog 5</fullName>
    </recommendedName>
    <alternativeName>
        <fullName evidence="10">Homologous to KES1 protein 1</fullName>
        <shortName evidence="10">Protein HES1</shortName>
    </alternativeName>
    <alternativeName>
        <fullName>Oxysterol-binding protein-related protein 5</fullName>
        <shortName>ORP 5</shortName>
        <shortName>OSBP-related protein 5</shortName>
    </alternativeName>
</protein>
<sequence length="434" mass="49505">MSQHASSSSWTSFLKSISSFNGDLSSLSAPPFILSPTSLTEFSQYWAEHPALFLEPSLIDGENYKDHCPFDPNVESKEVAQMLAVVRWFISTLRSQYCSRSESMGSEKKPLNPFLGEVFVGKWKNDEHPEFGETVLLSEQVSHHPPMTAFSIFNEKNDVSVQGYNQIKTGFTKTLTLTVKPYGHVILKIKDETYLITTPPLHIEGILVASPFVELGGRSFIQSSNGMLCVIEFSGRGYFTGKKNSFKARIYRSPQEHSHKENALYLISGQWSGVSTIIKKDSQVSHQFYDSSETPTEHLLVKPIEEQHPLESRRAWKDVAEAIRQGNISMIKKTKEELENKQRALREQERVKGVEWQRRWFKQVDYMNENTSNDVEKASEDDAFRKLASKLQLSVKNVPSGTLIGGKDDKKDVSTALHWRFDKNLWMRENEITI</sequence>
<evidence type="ECO:0000250" key="1">
    <source>
        <dbReference type="UniProtKB" id="P35844"/>
    </source>
</evidence>
<evidence type="ECO:0000269" key="2">
    <source>
    </source>
</evidence>
<evidence type="ECO:0000269" key="3">
    <source>
    </source>
</evidence>
<evidence type="ECO:0000269" key="4">
    <source>
    </source>
</evidence>
<evidence type="ECO:0000269" key="5">
    <source>
    </source>
</evidence>
<evidence type="ECO:0000269" key="6">
    <source>
    </source>
</evidence>
<evidence type="ECO:0000269" key="7">
    <source>
    </source>
</evidence>
<evidence type="ECO:0000269" key="8">
    <source>
    </source>
</evidence>
<evidence type="ECO:0000303" key="9">
    <source>
    </source>
</evidence>
<evidence type="ECO:0000303" key="10">
    <source>
    </source>
</evidence>
<evidence type="ECO:0000305" key="11"/>
<evidence type="ECO:0000305" key="12">
    <source>
    </source>
</evidence>
<keyword id="KW-0444">Lipid biosynthesis</keyword>
<keyword id="KW-0443">Lipid metabolism</keyword>
<keyword id="KW-0472">Membrane</keyword>
<keyword id="KW-0597">Phosphoprotein</keyword>
<keyword id="KW-1185">Reference proteome</keyword>
<keyword id="KW-0752">Steroid biosynthesis</keyword>
<keyword id="KW-0753">Steroid metabolism</keyword>
<keyword id="KW-0756">Sterol biosynthesis</keyword>
<keyword id="KW-1207">Sterol metabolism</keyword>
<keyword id="KW-0926">Vacuole</keyword>